<accession>Q9KQ65</accession>
<sequence>MRGSLQAYKKVSVDSQLSAASPHKIVQMLMAGAIERLIQGKAAMQQGNIPVKGERLGKALDIIISLRSCLSMEDGGDIAKNLDQLYDFMVNQITQANHKNDPQMLDDVIEIIREIKSAWDQIPPEYHNLTAAEVGI</sequence>
<proteinExistence type="inferred from homology"/>
<feature type="chain" id="PRO_0000180973" description="Flagellar secretion chaperone FliS">
    <location>
        <begin position="1"/>
        <end position="136"/>
    </location>
</feature>
<dbReference type="EMBL" id="AE003852">
    <property type="protein sequence ID" value="AAF95283.1"/>
    <property type="molecule type" value="Genomic_DNA"/>
</dbReference>
<dbReference type="PIR" id="E82111">
    <property type="entry name" value="E82111"/>
</dbReference>
<dbReference type="RefSeq" id="NP_231769.1">
    <property type="nucleotide sequence ID" value="NC_002505.1"/>
</dbReference>
<dbReference type="RefSeq" id="WP_001214990.1">
    <property type="nucleotide sequence ID" value="NZ_LT906614.1"/>
</dbReference>
<dbReference type="SMR" id="Q9KQ65"/>
<dbReference type="STRING" id="243277.VC_2138"/>
<dbReference type="DNASU" id="2613274"/>
<dbReference type="EnsemblBacteria" id="AAF95283">
    <property type="protein sequence ID" value="AAF95283"/>
    <property type="gene ID" value="VC_2138"/>
</dbReference>
<dbReference type="GeneID" id="88782963"/>
<dbReference type="KEGG" id="vch:VC_2138"/>
<dbReference type="PATRIC" id="fig|243277.26.peg.2043"/>
<dbReference type="eggNOG" id="COG1516">
    <property type="taxonomic scope" value="Bacteria"/>
</dbReference>
<dbReference type="HOGENOM" id="CLU_080373_1_2_6"/>
<dbReference type="Proteomes" id="UP000000584">
    <property type="component" value="Chromosome 1"/>
</dbReference>
<dbReference type="GO" id="GO:0005829">
    <property type="term" value="C:cytosol"/>
    <property type="evidence" value="ECO:0007669"/>
    <property type="project" value="UniProtKB-SubCell"/>
</dbReference>
<dbReference type="GO" id="GO:0044780">
    <property type="term" value="P:bacterial-type flagellum assembly"/>
    <property type="evidence" value="ECO:0007669"/>
    <property type="project" value="InterPro"/>
</dbReference>
<dbReference type="GO" id="GO:0071973">
    <property type="term" value="P:bacterial-type flagellum-dependent cell motility"/>
    <property type="evidence" value="ECO:0000318"/>
    <property type="project" value="GO_Central"/>
</dbReference>
<dbReference type="CDD" id="cd16098">
    <property type="entry name" value="FliS"/>
    <property type="match status" value="1"/>
</dbReference>
<dbReference type="FunFam" id="1.20.120.340:FF:000001">
    <property type="entry name" value="Flagellar secretion chaperone FliS"/>
    <property type="match status" value="1"/>
</dbReference>
<dbReference type="Gene3D" id="1.20.120.340">
    <property type="entry name" value="Flagellar protein FliS"/>
    <property type="match status" value="1"/>
</dbReference>
<dbReference type="InterPro" id="IPR003713">
    <property type="entry name" value="FliS"/>
</dbReference>
<dbReference type="InterPro" id="IPR036584">
    <property type="entry name" value="FliS_sf"/>
</dbReference>
<dbReference type="NCBIfam" id="TIGR00208">
    <property type="entry name" value="fliS"/>
    <property type="match status" value="1"/>
</dbReference>
<dbReference type="PANTHER" id="PTHR34773">
    <property type="entry name" value="FLAGELLAR SECRETION CHAPERONE FLIS"/>
    <property type="match status" value="1"/>
</dbReference>
<dbReference type="PANTHER" id="PTHR34773:SF1">
    <property type="entry name" value="FLAGELLAR SECRETION CHAPERONE FLIS"/>
    <property type="match status" value="1"/>
</dbReference>
<dbReference type="Pfam" id="PF02561">
    <property type="entry name" value="FliS"/>
    <property type="match status" value="1"/>
</dbReference>
<dbReference type="PIRSF" id="PIRSF039090">
    <property type="entry name" value="Flis"/>
    <property type="match status" value="1"/>
</dbReference>
<dbReference type="SUPFAM" id="SSF101116">
    <property type="entry name" value="Flagellar export chaperone FliS"/>
    <property type="match status" value="1"/>
</dbReference>
<organism>
    <name type="scientific">Vibrio cholerae serotype O1 (strain ATCC 39315 / El Tor Inaba N16961)</name>
    <dbReference type="NCBI Taxonomy" id="243277"/>
    <lineage>
        <taxon>Bacteria</taxon>
        <taxon>Pseudomonadati</taxon>
        <taxon>Pseudomonadota</taxon>
        <taxon>Gammaproteobacteria</taxon>
        <taxon>Vibrionales</taxon>
        <taxon>Vibrionaceae</taxon>
        <taxon>Vibrio</taxon>
    </lineage>
</organism>
<gene>
    <name type="primary">fliS</name>
    <name type="ordered locus">VC_2138</name>
</gene>
<evidence type="ECO:0000305" key="1"/>
<protein>
    <recommendedName>
        <fullName>Flagellar secretion chaperone FliS</fullName>
    </recommendedName>
</protein>
<reference key="1">
    <citation type="journal article" date="2000" name="Nature">
        <title>DNA sequence of both chromosomes of the cholera pathogen Vibrio cholerae.</title>
        <authorList>
            <person name="Heidelberg J.F."/>
            <person name="Eisen J.A."/>
            <person name="Nelson W.C."/>
            <person name="Clayton R.A."/>
            <person name="Gwinn M.L."/>
            <person name="Dodson R.J."/>
            <person name="Haft D.H."/>
            <person name="Hickey E.K."/>
            <person name="Peterson J.D."/>
            <person name="Umayam L.A."/>
            <person name="Gill S.R."/>
            <person name="Nelson K.E."/>
            <person name="Read T.D."/>
            <person name="Tettelin H."/>
            <person name="Richardson D.L."/>
            <person name="Ermolaeva M.D."/>
            <person name="Vamathevan J.J."/>
            <person name="Bass S."/>
            <person name="Qin H."/>
            <person name="Dragoi I."/>
            <person name="Sellers P."/>
            <person name="McDonald L.A."/>
            <person name="Utterback T.R."/>
            <person name="Fleischmann R.D."/>
            <person name="Nierman W.C."/>
            <person name="White O."/>
            <person name="Salzberg S.L."/>
            <person name="Smith H.O."/>
            <person name="Colwell R.R."/>
            <person name="Mekalanos J.J."/>
            <person name="Venter J.C."/>
            <person name="Fraser C.M."/>
        </authorList>
    </citation>
    <scope>NUCLEOTIDE SEQUENCE [LARGE SCALE GENOMIC DNA]</scope>
    <source>
        <strain>ATCC 39315 / El Tor Inaba N16961</strain>
    </source>
</reference>
<comment type="subcellular location">
    <subcellularLocation>
        <location evidence="1">Cytoplasm</location>
        <location evidence="1">Cytosol</location>
    </subcellularLocation>
</comment>
<comment type="similarity">
    <text evidence="1">Belongs to the FliS family.</text>
</comment>
<keyword id="KW-1005">Bacterial flagellum biogenesis</keyword>
<keyword id="KW-0143">Chaperone</keyword>
<keyword id="KW-0963">Cytoplasm</keyword>
<keyword id="KW-1185">Reference proteome</keyword>
<name>FLIS_VIBCH</name>